<gene>
    <name evidence="1" type="primary">mnmG</name>
    <name evidence="1" type="synonym">gidA</name>
    <name type="ordered locus">BPSL3408</name>
</gene>
<keyword id="KW-0963">Cytoplasm</keyword>
<keyword id="KW-0274">FAD</keyword>
<keyword id="KW-0285">Flavoprotein</keyword>
<keyword id="KW-0520">NAD</keyword>
<keyword id="KW-1185">Reference proteome</keyword>
<keyword id="KW-0819">tRNA processing</keyword>
<sequence length="657" mass="71995">MLYPTEFDVIVVGGGHAGTEAALASARMGAKTLLLTHNIETLGQMSCNPSIGGIGKGHLVKEVDALGGAMAAATDEGGIQFRILNSSKGPAVRATRAQADRVLYKQAIRRRLENQPNLWLFQQAVDDLMVEGDRVVGAVTQVGVRFRARAVVLTAGTFLDGKIHVGLNHYTGGRAGDPAAVSLSSRLKELNLPQGRLKTGTPPRIDGRTIDFSKLDEQPGDLDPIPVFSFLGRAEQHPQQLPCWVTHTNERTHDIIRSGLDRSPMYTGVIEGVGPRYCPSIEDKIHRFASKDSHQIFLEPEGLTTNEFYPNGISTSLPFDVQLALVHSMRGLEQAHILRPGYAIEYDYFDPRALKSSLETKAIGGLFFAGQINGTTGYEEAAAQGLLAGINAGRYAQEKDAWCPRRDQAYLGVLVDDLVTRGISEPYRMFTSRAEYRLSLREDNADMRLTEIGRELGVVDDVRWDAFNRKRDAVSRETERLRTTWVTPKTLPADEATALLGKPIDHEYSLAELLRRPGVSYDGVCGLRGGECGPSEPLAEDELLLAQIKEQIEIGIKYQGYIERQAGEIERNGANENTRLPDGIDYTEVRGLSFEVSQKLNQFRPETIGQASRISGMTPAAISLLMVHLKKRGLGRRKGADSVPGADVQADNTAAQQ</sequence>
<dbReference type="EMBL" id="BX571965">
    <property type="protein sequence ID" value="CAH37420.1"/>
    <property type="molecule type" value="Genomic_DNA"/>
</dbReference>
<dbReference type="RefSeq" id="WP_004556009.1">
    <property type="nucleotide sequence ID" value="NZ_CP009538.1"/>
</dbReference>
<dbReference type="RefSeq" id="YP_110001.1">
    <property type="nucleotide sequence ID" value="NC_006350.1"/>
</dbReference>
<dbReference type="SMR" id="Q63PG8"/>
<dbReference type="STRING" id="272560.BPSL3408"/>
<dbReference type="KEGG" id="bps:BPSL3408"/>
<dbReference type="PATRIC" id="fig|272560.51.peg.1781"/>
<dbReference type="eggNOG" id="COG0445">
    <property type="taxonomic scope" value="Bacteria"/>
</dbReference>
<dbReference type="Proteomes" id="UP000000605">
    <property type="component" value="Chromosome 1"/>
</dbReference>
<dbReference type="GO" id="GO:0005829">
    <property type="term" value="C:cytosol"/>
    <property type="evidence" value="ECO:0007669"/>
    <property type="project" value="TreeGrafter"/>
</dbReference>
<dbReference type="GO" id="GO:0050660">
    <property type="term" value="F:flavin adenine dinucleotide binding"/>
    <property type="evidence" value="ECO:0007669"/>
    <property type="project" value="UniProtKB-UniRule"/>
</dbReference>
<dbReference type="GO" id="GO:0030488">
    <property type="term" value="P:tRNA methylation"/>
    <property type="evidence" value="ECO:0007669"/>
    <property type="project" value="TreeGrafter"/>
</dbReference>
<dbReference type="GO" id="GO:0002098">
    <property type="term" value="P:tRNA wobble uridine modification"/>
    <property type="evidence" value="ECO:0007669"/>
    <property type="project" value="InterPro"/>
</dbReference>
<dbReference type="FunFam" id="1.10.10.1800:FF:000001">
    <property type="entry name" value="tRNA uridine 5-carboxymethylaminomethyl modification enzyme MnmG"/>
    <property type="match status" value="1"/>
</dbReference>
<dbReference type="FunFam" id="1.10.150.570:FF:000001">
    <property type="entry name" value="tRNA uridine 5-carboxymethylaminomethyl modification enzyme MnmG"/>
    <property type="match status" value="1"/>
</dbReference>
<dbReference type="FunFam" id="3.50.50.60:FF:000002">
    <property type="entry name" value="tRNA uridine 5-carboxymethylaminomethyl modification enzyme MnmG"/>
    <property type="match status" value="1"/>
</dbReference>
<dbReference type="FunFam" id="3.50.50.60:FF:000010">
    <property type="entry name" value="tRNA uridine 5-carboxymethylaminomethyl modification enzyme MnmG"/>
    <property type="match status" value="1"/>
</dbReference>
<dbReference type="Gene3D" id="3.50.50.60">
    <property type="entry name" value="FAD/NAD(P)-binding domain"/>
    <property type="match status" value="2"/>
</dbReference>
<dbReference type="Gene3D" id="1.10.150.570">
    <property type="entry name" value="GidA associated domain, C-terminal subdomain"/>
    <property type="match status" value="1"/>
</dbReference>
<dbReference type="Gene3D" id="1.10.10.1800">
    <property type="entry name" value="tRNA uridine 5-carboxymethylaminomethyl modification enzyme MnmG/GidA"/>
    <property type="match status" value="1"/>
</dbReference>
<dbReference type="HAMAP" id="MF_00129">
    <property type="entry name" value="MnmG_GidA"/>
    <property type="match status" value="1"/>
</dbReference>
<dbReference type="InterPro" id="IPR036188">
    <property type="entry name" value="FAD/NAD-bd_sf"/>
</dbReference>
<dbReference type="InterPro" id="IPR049312">
    <property type="entry name" value="GIDA_C_N"/>
</dbReference>
<dbReference type="InterPro" id="IPR004416">
    <property type="entry name" value="MnmG"/>
</dbReference>
<dbReference type="InterPro" id="IPR002218">
    <property type="entry name" value="MnmG-rel"/>
</dbReference>
<dbReference type="InterPro" id="IPR020595">
    <property type="entry name" value="MnmG-rel_CS"/>
</dbReference>
<dbReference type="InterPro" id="IPR026904">
    <property type="entry name" value="MnmG_C"/>
</dbReference>
<dbReference type="InterPro" id="IPR047001">
    <property type="entry name" value="MnmG_C_subdom"/>
</dbReference>
<dbReference type="InterPro" id="IPR044920">
    <property type="entry name" value="MnmG_C_subdom_sf"/>
</dbReference>
<dbReference type="InterPro" id="IPR040131">
    <property type="entry name" value="MnmG_N"/>
</dbReference>
<dbReference type="NCBIfam" id="TIGR00136">
    <property type="entry name" value="mnmG_gidA"/>
    <property type="match status" value="1"/>
</dbReference>
<dbReference type="PANTHER" id="PTHR11806">
    <property type="entry name" value="GLUCOSE INHIBITED DIVISION PROTEIN A"/>
    <property type="match status" value="1"/>
</dbReference>
<dbReference type="PANTHER" id="PTHR11806:SF0">
    <property type="entry name" value="PROTEIN MTO1 HOMOLOG, MITOCHONDRIAL"/>
    <property type="match status" value="1"/>
</dbReference>
<dbReference type="Pfam" id="PF01134">
    <property type="entry name" value="GIDA"/>
    <property type="match status" value="1"/>
</dbReference>
<dbReference type="Pfam" id="PF21680">
    <property type="entry name" value="GIDA_C_1st"/>
    <property type="match status" value="1"/>
</dbReference>
<dbReference type="Pfam" id="PF13932">
    <property type="entry name" value="SAM_GIDA_C"/>
    <property type="match status" value="1"/>
</dbReference>
<dbReference type="SMART" id="SM01228">
    <property type="entry name" value="GIDA_assoc_3"/>
    <property type="match status" value="1"/>
</dbReference>
<dbReference type="SUPFAM" id="SSF51905">
    <property type="entry name" value="FAD/NAD(P)-binding domain"/>
    <property type="match status" value="1"/>
</dbReference>
<dbReference type="PROSITE" id="PS01280">
    <property type="entry name" value="GIDA_1"/>
    <property type="match status" value="1"/>
</dbReference>
<dbReference type="PROSITE" id="PS01281">
    <property type="entry name" value="GIDA_2"/>
    <property type="match status" value="1"/>
</dbReference>
<protein>
    <recommendedName>
        <fullName evidence="1">tRNA uridine 5-carboxymethylaminomethyl modification enzyme MnmG</fullName>
    </recommendedName>
    <alternativeName>
        <fullName evidence="1">Glucose-inhibited division protein A</fullName>
    </alternativeName>
</protein>
<comment type="function">
    <text evidence="1">NAD-binding protein involved in the addition of a carboxymethylaminomethyl (cmnm) group at the wobble position (U34) of certain tRNAs, forming tRNA-cmnm(5)s(2)U34.</text>
</comment>
<comment type="cofactor">
    <cofactor evidence="1">
        <name>FAD</name>
        <dbReference type="ChEBI" id="CHEBI:57692"/>
    </cofactor>
</comment>
<comment type="subunit">
    <text evidence="1">Homodimer. Heterotetramer of two MnmE and two MnmG subunits.</text>
</comment>
<comment type="subcellular location">
    <subcellularLocation>
        <location evidence="1">Cytoplasm</location>
    </subcellularLocation>
</comment>
<comment type="similarity">
    <text evidence="1">Belongs to the MnmG family.</text>
</comment>
<feature type="chain" id="PRO_0000117076" description="tRNA uridine 5-carboxymethylaminomethyl modification enzyme MnmG">
    <location>
        <begin position="1"/>
        <end position="657"/>
    </location>
</feature>
<feature type="region of interest" description="Disordered" evidence="2">
    <location>
        <begin position="636"/>
        <end position="657"/>
    </location>
</feature>
<feature type="binding site" evidence="1">
    <location>
        <begin position="13"/>
        <end position="18"/>
    </location>
    <ligand>
        <name>FAD</name>
        <dbReference type="ChEBI" id="CHEBI:57692"/>
    </ligand>
</feature>
<feature type="binding site" evidence="1">
    <location>
        <begin position="274"/>
        <end position="288"/>
    </location>
    <ligand>
        <name>NAD(+)</name>
        <dbReference type="ChEBI" id="CHEBI:57540"/>
    </ligand>
</feature>
<organism>
    <name type="scientific">Burkholderia pseudomallei (strain K96243)</name>
    <dbReference type="NCBI Taxonomy" id="272560"/>
    <lineage>
        <taxon>Bacteria</taxon>
        <taxon>Pseudomonadati</taxon>
        <taxon>Pseudomonadota</taxon>
        <taxon>Betaproteobacteria</taxon>
        <taxon>Burkholderiales</taxon>
        <taxon>Burkholderiaceae</taxon>
        <taxon>Burkholderia</taxon>
        <taxon>pseudomallei group</taxon>
    </lineage>
</organism>
<evidence type="ECO:0000255" key="1">
    <source>
        <dbReference type="HAMAP-Rule" id="MF_00129"/>
    </source>
</evidence>
<evidence type="ECO:0000256" key="2">
    <source>
        <dbReference type="SAM" id="MobiDB-lite"/>
    </source>
</evidence>
<reference key="1">
    <citation type="journal article" date="2004" name="Proc. Natl. Acad. Sci. U.S.A.">
        <title>Genomic plasticity of the causative agent of melioidosis, Burkholderia pseudomallei.</title>
        <authorList>
            <person name="Holden M.T.G."/>
            <person name="Titball R.W."/>
            <person name="Peacock S.J."/>
            <person name="Cerdeno-Tarraga A.-M."/>
            <person name="Atkins T."/>
            <person name="Crossman L.C."/>
            <person name="Pitt T."/>
            <person name="Churcher C."/>
            <person name="Mungall K.L."/>
            <person name="Bentley S.D."/>
            <person name="Sebaihia M."/>
            <person name="Thomson N.R."/>
            <person name="Bason N."/>
            <person name="Beacham I.R."/>
            <person name="Brooks K."/>
            <person name="Brown K.A."/>
            <person name="Brown N.F."/>
            <person name="Challis G.L."/>
            <person name="Cherevach I."/>
            <person name="Chillingworth T."/>
            <person name="Cronin A."/>
            <person name="Crossett B."/>
            <person name="Davis P."/>
            <person name="DeShazer D."/>
            <person name="Feltwell T."/>
            <person name="Fraser A."/>
            <person name="Hance Z."/>
            <person name="Hauser H."/>
            <person name="Holroyd S."/>
            <person name="Jagels K."/>
            <person name="Keith K.E."/>
            <person name="Maddison M."/>
            <person name="Moule S."/>
            <person name="Price C."/>
            <person name="Quail M.A."/>
            <person name="Rabbinowitsch E."/>
            <person name="Rutherford K."/>
            <person name="Sanders M."/>
            <person name="Simmonds M."/>
            <person name="Songsivilai S."/>
            <person name="Stevens K."/>
            <person name="Tumapa S."/>
            <person name="Vesaratchavest M."/>
            <person name="Whitehead S."/>
            <person name="Yeats C."/>
            <person name="Barrell B.G."/>
            <person name="Oyston P.C.F."/>
            <person name="Parkhill J."/>
        </authorList>
    </citation>
    <scope>NUCLEOTIDE SEQUENCE [LARGE SCALE GENOMIC DNA]</scope>
    <source>
        <strain>K96243</strain>
    </source>
</reference>
<proteinExistence type="inferred from homology"/>
<accession>Q63PG8</accession>
<name>MNMG_BURPS</name>